<proteinExistence type="inferred from homology"/>
<keyword id="KW-1185">Reference proteome</keyword>
<keyword id="KW-0687">Ribonucleoprotein</keyword>
<keyword id="KW-0689">Ribosomal protein</keyword>
<keyword id="KW-0694">RNA-binding</keyword>
<keyword id="KW-0699">rRNA-binding</keyword>
<evidence type="ECO:0000255" key="1">
    <source>
        <dbReference type="HAMAP-Rule" id="MF_01306"/>
    </source>
</evidence>
<evidence type="ECO:0000305" key="2"/>
<name>RS4_BIFA0</name>
<protein>
    <recommendedName>
        <fullName evidence="1">Small ribosomal subunit protein uS4</fullName>
    </recommendedName>
    <alternativeName>
        <fullName evidence="2">30S ribosomal protein S4</fullName>
    </alternativeName>
</protein>
<dbReference type="EMBL" id="CP001213">
    <property type="protein sequence ID" value="ACL29741.1"/>
    <property type="molecule type" value="Genomic_DNA"/>
</dbReference>
<dbReference type="RefSeq" id="WP_004217809.1">
    <property type="nucleotide sequence ID" value="NC_011835.1"/>
</dbReference>
<dbReference type="SMR" id="B8DUR2"/>
<dbReference type="STRING" id="442563.BLA_1458"/>
<dbReference type="GeneID" id="29696371"/>
<dbReference type="KEGG" id="bla:BLA_1458"/>
<dbReference type="HOGENOM" id="CLU_092403_0_3_11"/>
<dbReference type="Proteomes" id="UP000002456">
    <property type="component" value="Chromosome"/>
</dbReference>
<dbReference type="GO" id="GO:0015935">
    <property type="term" value="C:small ribosomal subunit"/>
    <property type="evidence" value="ECO:0007669"/>
    <property type="project" value="InterPro"/>
</dbReference>
<dbReference type="GO" id="GO:0019843">
    <property type="term" value="F:rRNA binding"/>
    <property type="evidence" value="ECO:0007669"/>
    <property type="project" value="UniProtKB-UniRule"/>
</dbReference>
<dbReference type="GO" id="GO:0003735">
    <property type="term" value="F:structural constituent of ribosome"/>
    <property type="evidence" value="ECO:0007669"/>
    <property type="project" value="InterPro"/>
</dbReference>
<dbReference type="GO" id="GO:0042274">
    <property type="term" value="P:ribosomal small subunit biogenesis"/>
    <property type="evidence" value="ECO:0007669"/>
    <property type="project" value="TreeGrafter"/>
</dbReference>
<dbReference type="GO" id="GO:0006412">
    <property type="term" value="P:translation"/>
    <property type="evidence" value="ECO:0007669"/>
    <property type="project" value="UniProtKB-UniRule"/>
</dbReference>
<dbReference type="CDD" id="cd00165">
    <property type="entry name" value="S4"/>
    <property type="match status" value="1"/>
</dbReference>
<dbReference type="FunFam" id="3.10.290.10:FF:000001">
    <property type="entry name" value="30S ribosomal protein S4"/>
    <property type="match status" value="1"/>
</dbReference>
<dbReference type="Gene3D" id="1.10.1050.10">
    <property type="entry name" value="Ribosomal Protein S4 Delta 41, Chain A, domain 1"/>
    <property type="match status" value="1"/>
</dbReference>
<dbReference type="Gene3D" id="3.10.290.10">
    <property type="entry name" value="RNA-binding S4 domain"/>
    <property type="match status" value="1"/>
</dbReference>
<dbReference type="HAMAP" id="MF_01306_B">
    <property type="entry name" value="Ribosomal_uS4_B"/>
    <property type="match status" value="1"/>
</dbReference>
<dbReference type="InterPro" id="IPR022801">
    <property type="entry name" value="Ribosomal_uS4"/>
</dbReference>
<dbReference type="InterPro" id="IPR005709">
    <property type="entry name" value="Ribosomal_uS4_bac-type"/>
</dbReference>
<dbReference type="InterPro" id="IPR018079">
    <property type="entry name" value="Ribosomal_uS4_CS"/>
</dbReference>
<dbReference type="InterPro" id="IPR001912">
    <property type="entry name" value="Ribosomal_uS4_N"/>
</dbReference>
<dbReference type="InterPro" id="IPR002942">
    <property type="entry name" value="S4_RNA-bd"/>
</dbReference>
<dbReference type="InterPro" id="IPR036986">
    <property type="entry name" value="S4_RNA-bd_sf"/>
</dbReference>
<dbReference type="NCBIfam" id="NF003717">
    <property type="entry name" value="PRK05327.1"/>
    <property type="match status" value="1"/>
</dbReference>
<dbReference type="NCBIfam" id="TIGR01017">
    <property type="entry name" value="rpsD_bact"/>
    <property type="match status" value="1"/>
</dbReference>
<dbReference type="PANTHER" id="PTHR11831">
    <property type="entry name" value="30S 40S RIBOSOMAL PROTEIN"/>
    <property type="match status" value="1"/>
</dbReference>
<dbReference type="PANTHER" id="PTHR11831:SF4">
    <property type="entry name" value="SMALL RIBOSOMAL SUBUNIT PROTEIN US4M"/>
    <property type="match status" value="1"/>
</dbReference>
<dbReference type="Pfam" id="PF00163">
    <property type="entry name" value="Ribosomal_S4"/>
    <property type="match status" value="1"/>
</dbReference>
<dbReference type="Pfam" id="PF01479">
    <property type="entry name" value="S4"/>
    <property type="match status" value="1"/>
</dbReference>
<dbReference type="SMART" id="SM01390">
    <property type="entry name" value="Ribosomal_S4"/>
    <property type="match status" value="1"/>
</dbReference>
<dbReference type="SMART" id="SM00363">
    <property type="entry name" value="S4"/>
    <property type="match status" value="1"/>
</dbReference>
<dbReference type="SUPFAM" id="SSF55174">
    <property type="entry name" value="Alpha-L RNA-binding motif"/>
    <property type="match status" value="1"/>
</dbReference>
<dbReference type="PROSITE" id="PS00632">
    <property type="entry name" value="RIBOSOMAL_S4"/>
    <property type="match status" value="1"/>
</dbReference>
<dbReference type="PROSITE" id="PS50889">
    <property type="entry name" value="S4"/>
    <property type="match status" value="1"/>
</dbReference>
<gene>
    <name evidence="1" type="primary">rpsD</name>
    <name type="ordered locus">BLA_1458</name>
</gene>
<comment type="function">
    <text evidence="1">One of the primary rRNA binding proteins, it binds directly to 16S rRNA where it nucleates assembly of the body of the 30S subunit.</text>
</comment>
<comment type="function">
    <text evidence="1">With S5 and S12 plays an important role in translational accuracy.</text>
</comment>
<comment type="subunit">
    <text evidence="1">Part of the 30S ribosomal subunit. Contacts protein S5. The interaction surface between S4 and S5 is involved in control of translational fidelity.</text>
</comment>
<comment type="similarity">
    <text evidence="1">Belongs to the universal ribosomal protein uS4 family.</text>
</comment>
<organism>
    <name type="scientific">Bifidobacterium animalis subsp. lactis (strain AD011)</name>
    <dbReference type="NCBI Taxonomy" id="442563"/>
    <lineage>
        <taxon>Bacteria</taxon>
        <taxon>Bacillati</taxon>
        <taxon>Actinomycetota</taxon>
        <taxon>Actinomycetes</taxon>
        <taxon>Bifidobacteriales</taxon>
        <taxon>Bifidobacteriaceae</taxon>
        <taxon>Bifidobacterium</taxon>
    </lineage>
</organism>
<accession>B8DUR2</accession>
<feature type="chain" id="PRO_1000214280" description="Small ribosomal subunit protein uS4">
    <location>
        <begin position="1"/>
        <end position="206"/>
    </location>
</feature>
<feature type="domain" description="S4 RNA-binding" evidence="1">
    <location>
        <begin position="93"/>
        <end position="153"/>
    </location>
</feature>
<sequence length="206" mass="23346">MSNRSRRQVRLSRALGIALTPKAQRIFEKRPYAPGEHGRTRRRAESDYAVRLREKQRLRAQYGISEKQLRAAYEKGTHTAGQTGNAMLTDLETRLDALVLRAGIARTTAQARQFVVHRHILVDGNIVDRPSYRVKPGQTIQVKPKSQTMVPFQIAAEGTHRDVLPPVPGYLDVNLASLKATLTRKPEPEEIPVQVNIQYVVEFYAR</sequence>
<reference key="1">
    <citation type="journal article" date="2009" name="J. Bacteriol.">
        <title>Genome sequence of the probiotic bacterium Bifidobacterium animalis subsp. lactis AD011.</title>
        <authorList>
            <person name="Kim J.F."/>
            <person name="Jeong H."/>
            <person name="Yu D.S."/>
            <person name="Choi S.-H."/>
            <person name="Hur C.-G."/>
            <person name="Park M.-S."/>
            <person name="Yoon S.H."/>
            <person name="Kim D.-W."/>
            <person name="Ji G.E."/>
            <person name="Park H.-S."/>
            <person name="Oh T.K."/>
        </authorList>
    </citation>
    <scope>NUCLEOTIDE SEQUENCE [LARGE SCALE GENOMIC DNA]</scope>
    <source>
        <strain>AD011</strain>
    </source>
</reference>